<gene>
    <name type="ORF">SPAC1039.04</name>
</gene>
<evidence type="ECO:0000255" key="1"/>
<evidence type="ECO:0000256" key="2">
    <source>
        <dbReference type="SAM" id="MobiDB-lite"/>
    </source>
</evidence>
<evidence type="ECO:0000269" key="3">
    <source>
    </source>
</evidence>
<evidence type="ECO:0000305" key="4"/>
<evidence type="ECO:0000312" key="5">
    <source>
        <dbReference type="EMBL" id="CAB63540.1"/>
    </source>
</evidence>
<sequence length="507" mass="56011">MEKSISSISKASMNSDEKLDKKEWDQQLPIDFGEGEDVTTEVYILDHKAERRLCRKFDFRILPLLALLYLFNALDKSNVSNAKTNGMDKDLGFVGDQYNIMISIFYIPFVLCAFPFSYLYKRFGAARILPFFMLSFGAMSLCQAAVKNFGGMMAVRWFLGMAESAVLPGVVYYLTTFYRRTELARRLAIFYAAANVSSAFGGLLAYGVFHIKGGKLQGWQYLFLIEGGVTFLCAIVIFLVLPVSVETANFLTDEEKTLAKMRIENDSSSAISEKLSFKQSLTVFKHPIAILWLLEEMALGVPLNSINNWLPQIVAAMGFSSVNTNLMTVAPAISGAIWLLVFAFISDFLKNRGIVLIAAISTTMIGFIVYGSIDIMNHIGVSYFACFLMTAGAAASSVLTSTWYNNNTPNESRRAVFTSVGVPLANVMGLVSANIFRPQDAPKYVPALGITAGFGGLGILLVASISVYMFFDNRRRDNAQGVKKTFADVSTKDLGEGPANPNFRWFL</sequence>
<reference evidence="5" key="1">
    <citation type="journal article" date="2002" name="Nature">
        <title>The genome sequence of Schizosaccharomyces pombe.</title>
        <authorList>
            <person name="Wood V."/>
            <person name="Gwilliam R."/>
            <person name="Rajandream M.A."/>
            <person name="Lyne M.H."/>
            <person name="Lyne R."/>
            <person name="Stewart A."/>
            <person name="Sgouros J.G."/>
            <person name="Peat N."/>
            <person name="Hayles J."/>
            <person name="Baker S.G."/>
            <person name="Basham D."/>
            <person name="Bowman S."/>
            <person name="Brooks K."/>
            <person name="Brown D."/>
            <person name="Brown S."/>
            <person name="Chillingworth T."/>
            <person name="Churcher C.M."/>
            <person name="Collins M."/>
            <person name="Connor R."/>
            <person name="Cronin A."/>
            <person name="Davis P."/>
            <person name="Feltwell T."/>
            <person name="Fraser A."/>
            <person name="Gentles S."/>
            <person name="Goble A."/>
            <person name="Hamlin N."/>
            <person name="Harris D.E."/>
            <person name="Hidalgo J."/>
            <person name="Hodgson G."/>
            <person name="Holroyd S."/>
            <person name="Hornsby T."/>
            <person name="Howarth S."/>
            <person name="Huckle E.J."/>
            <person name="Hunt S."/>
            <person name="Jagels K."/>
            <person name="James K.D."/>
            <person name="Jones L."/>
            <person name="Jones M."/>
            <person name="Leather S."/>
            <person name="McDonald S."/>
            <person name="McLean J."/>
            <person name="Mooney P."/>
            <person name="Moule S."/>
            <person name="Mungall K.L."/>
            <person name="Murphy L.D."/>
            <person name="Niblett D."/>
            <person name="Odell C."/>
            <person name="Oliver K."/>
            <person name="O'Neil S."/>
            <person name="Pearson D."/>
            <person name="Quail M.A."/>
            <person name="Rabbinowitsch E."/>
            <person name="Rutherford K.M."/>
            <person name="Rutter S."/>
            <person name="Saunders D."/>
            <person name="Seeger K."/>
            <person name="Sharp S."/>
            <person name="Skelton J."/>
            <person name="Simmonds M.N."/>
            <person name="Squares R."/>
            <person name="Squares S."/>
            <person name="Stevens K."/>
            <person name="Taylor K."/>
            <person name="Taylor R.G."/>
            <person name="Tivey A."/>
            <person name="Walsh S.V."/>
            <person name="Warren T."/>
            <person name="Whitehead S."/>
            <person name="Woodward J.R."/>
            <person name="Volckaert G."/>
            <person name="Aert R."/>
            <person name="Robben J."/>
            <person name="Grymonprez B."/>
            <person name="Weltjens I."/>
            <person name="Vanstreels E."/>
            <person name="Rieger M."/>
            <person name="Schaefer M."/>
            <person name="Mueller-Auer S."/>
            <person name="Gabel C."/>
            <person name="Fuchs M."/>
            <person name="Duesterhoeft A."/>
            <person name="Fritzc C."/>
            <person name="Holzer E."/>
            <person name="Moestl D."/>
            <person name="Hilbert H."/>
            <person name="Borzym K."/>
            <person name="Langer I."/>
            <person name="Beck A."/>
            <person name="Lehrach H."/>
            <person name="Reinhardt R."/>
            <person name="Pohl T.M."/>
            <person name="Eger P."/>
            <person name="Zimmermann W."/>
            <person name="Wedler H."/>
            <person name="Wambutt R."/>
            <person name="Purnelle B."/>
            <person name="Goffeau A."/>
            <person name="Cadieu E."/>
            <person name="Dreano S."/>
            <person name="Gloux S."/>
            <person name="Lelaure V."/>
            <person name="Mottier S."/>
            <person name="Galibert F."/>
            <person name="Aves S.J."/>
            <person name="Xiang Z."/>
            <person name="Hunt C."/>
            <person name="Moore K."/>
            <person name="Hurst S.M."/>
            <person name="Lucas M."/>
            <person name="Rochet M."/>
            <person name="Gaillardin C."/>
            <person name="Tallada V.A."/>
            <person name="Garzon A."/>
            <person name="Thode G."/>
            <person name="Daga R.R."/>
            <person name="Cruzado L."/>
            <person name="Jimenez J."/>
            <person name="Sanchez M."/>
            <person name="del Rey F."/>
            <person name="Benito J."/>
            <person name="Dominguez A."/>
            <person name="Revuelta J.L."/>
            <person name="Moreno S."/>
            <person name="Armstrong J."/>
            <person name="Forsburg S.L."/>
            <person name="Cerutti L."/>
            <person name="Lowe T."/>
            <person name="McCombie W.R."/>
            <person name="Paulsen I."/>
            <person name="Potashkin J."/>
            <person name="Shpakovski G.V."/>
            <person name="Ussery D."/>
            <person name="Barrell B.G."/>
            <person name="Nurse P."/>
        </authorList>
    </citation>
    <scope>NUCLEOTIDE SEQUENCE [LARGE SCALE GENOMIC DNA]</scope>
    <source>
        <strain>972 / ATCC 24843</strain>
    </source>
</reference>
<reference evidence="4" key="2">
    <citation type="journal article" date="2006" name="Nat. Biotechnol.">
        <title>ORFeome cloning and global analysis of protein localization in the fission yeast Schizosaccharomyces pombe.</title>
        <authorList>
            <person name="Matsuyama A."/>
            <person name="Arai R."/>
            <person name="Yashiroda Y."/>
            <person name="Shirai A."/>
            <person name="Kamata A."/>
            <person name="Sekido S."/>
            <person name="Kobayashi Y."/>
            <person name="Hashimoto A."/>
            <person name="Hamamoto M."/>
            <person name="Hiraoka Y."/>
            <person name="Horinouchi S."/>
            <person name="Yoshida M."/>
        </authorList>
    </citation>
    <scope>SUBCELLULAR LOCATION [LARGE SCALE ANALYSIS]</scope>
</reference>
<proteinExistence type="inferred from homology"/>
<protein>
    <recommendedName>
        <fullName>Uncharacterized transporter C1039.04</fullName>
    </recommendedName>
</protein>
<organism>
    <name type="scientific">Schizosaccharomyces pombe (strain 972 / ATCC 24843)</name>
    <name type="common">Fission yeast</name>
    <dbReference type="NCBI Taxonomy" id="284812"/>
    <lineage>
        <taxon>Eukaryota</taxon>
        <taxon>Fungi</taxon>
        <taxon>Dikarya</taxon>
        <taxon>Ascomycota</taxon>
        <taxon>Taphrinomycotina</taxon>
        <taxon>Schizosaccharomycetes</taxon>
        <taxon>Schizosaccharomycetales</taxon>
        <taxon>Schizosaccharomycetaceae</taxon>
        <taxon>Schizosaccharomyces</taxon>
    </lineage>
</organism>
<name>YFZ4_SCHPO</name>
<accession>Q9US37</accession>
<comment type="subcellular location">
    <subcellularLocation>
        <location evidence="3">Endoplasmic reticulum</location>
    </subcellularLocation>
    <subcellularLocation>
        <location evidence="1">Membrane</location>
        <topology evidence="1">Multi-pass membrane protein</topology>
    </subcellularLocation>
</comment>
<comment type="similarity">
    <text evidence="1">Belongs to the major facilitator superfamily. Allantoate permease family.</text>
</comment>
<dbReference type="EMBL" id="CU329670">
    <property type="protein sequence ID" value="CAB63540.1"/>
    <property type="molecule type" value="Genomic_DNA"/>
</dbReference>
<dbReference type="PIR" id="T50054">
    <property type="entry name" value="T50054"/>
</dbReference>
<dbReference type="RefSeq" id="NP_594995.1">
    <property type="nucleotide sequence ID" value="NM_001020426.2"/>
</dbReference>
<dbReference type="SMR" id="Q9US37"/>
<dbReference type="BioGRID" id="279400">
    <property type="interactions" value="6"/>
</dbReference>
<dbReference type="FunCoup" id="Q9US37">
    <property type="interactions" value="28"/>
</dbReference>
<dbReference type="iPTMnet" id="Q9US37"/>
<dbReference type="PaxDb" id="4896-SPAC1039.04.1"/>
<dbReference type="EnsemblFungi" id="SPAC1039.04.1">
    <property type="protein sequence ID" value="SPAC1039.04.1:pep"/>
    <property type="gene ID" value="SPAC1039.04"/>
</dbReference>
<dbReference type="KEGG" id="spo:2542960"/>
<dbReference type="PomBase" id="SPAC1039.04"/>
<dbReference type="VEuPathDB" id="FungiDB:SPAC1039.04"/>
<dbReference type="eggNOG" id="KOG2533">
    <property type="taxonomic scope" value="Eukaryota"/>
</dbReference>
<dbReference type="HOGENOM" id="CLU_001265_0_1_1"/>
<dbReference type="InParanoid" id="Q9US37"/>
<dbReference type="OMA" id="VILDVWY"/>
<dbReference type="PhylomeDB" id="Q9US37"/>
<dbReference type="PRO" id="PR:Q9US37"/>
<dbReference type="Proteomes" id="UP000002485">
    <property type="component" value="Chromosome I"/>
</dbReference>
<dbReference type="GO" id="GO:0005783">
    <property type="term" value="C:endoplasmic reticulum"/>
    <property type="evidence" value="ECO:0007005"/>
    <property type="project" value="PomBase"/>
</dbReference>
<dbReference type="GO" id="GO:0016020">
    <property type="term" value="C:membrane"/>
    <property type="evidence" value="ECO:0000318"/>
    <property type="project" value="GO_Central"/>
</dbReference>
<dbReference type="GO" id="GO:0005886">
    <property type="term" value="C:plasma membrane"/>
    <property type="evidence" value="ECO:0000266"/>
    <property type="project" value="PomBase"/>
</dbReference>
<dbReference type="GO" id="GO:0046943">
    <property type="term" value="F:carboxylic acid transmembrane transporter activity"/>
    <property type="evidence" value="ECO:0000266"/>
    <property type="project" value="PomBase"/>
</dbReference>
<dbReference type="GO" id="GO:0022857">
    <property type="term" value="F:transmembrane transporter activity"/>
    <property type="evidence" value="ECO:0000318"/>
    <property type="project" value="GO_Central"/>
</dbReference>
<dbReference type="GO" id="GO:1905039">
    <property type="term" value="P:carboxylic acid transmembrane transport"/>
    <property type="evidence" value="ECO:0000266"/>
    <property type="project" value="PomBase"/>
</dbReference>
<dbReference type="CDD" id="cd17327">
    <property type="entry name" value="MFS_FEN2_like"/>
    <property type="match status" value="1"/>
</dbReference>
<dbReference type="FunFam" id="1.20.1250.20:FF:000013">
    <property type="entry name" value="MFS general substrate transporter"/>
    <property type="match status" value="1"/>
</dbReference>
<dbReference type="FunFam" id="1.20.1250.20:FF:000188">
    <property type="entry name" value="MFS general substrate transporter"/>
    <property type="match status" value="1"/>
</dbReference>
<dbReference type="Gene3D" id="1.20.1250.20">
    <property type="entry name" value="MFS general substrate transporter like domains"/>
    <property type="match status" value="2"/>
</dbReference>
<dbReference type="InterPro" id="IPR011701">
    <property type="entry name" value="MFS"/>
</dbReference>
<dbReference type="InterPro" id="IPR020846">
    <property type="entry name" value="MFS_dom"/>
</dbReference>
<dbReference type="InterPro" id="IPR036259">
    <property type="entry name" value="MFS_trans_sf"/>
</dbReference>
<dbReference type="PANTHER" id="PTHR43791">
    <property type="entry name" value="PERMEASE-RELATED"/>
    <property type="match status" value="1"/>
</dbReference>
<dbReference type="PANTHER" id="PTHR43791:SF50">
    <property type="entry name" value="TRANSPORTER, PUTATIVE (AFU_ORTHOLOGUE AFUA_2G00840)-RELATED"/>
    <property type="match status" value="1"/>
</dbReference>
<dbReference type="Pfam" id="PF07690">
    <property type="entry name" value="MFS_1"/>
    <property type="match status" value="1"/>
</dbReference>
<dbReference type="SUPFAM" id="SSF103473">
    <property type="entry name" value="MFS general substrate transporter"/>
    <property type="match status" value="1"/>
</dbReference>
<dbReference type="PROSITE" id="PS50850">
    <property type="entry name" value="MFS"/>
    <property type="match status" value="1"/>
</dbReference>
<feature type="chain" id="PRO_0000372720" description="Uncharacterized transporter C1039.04">
    <location>
        <begin position="1"/>
        <end position="507"/>
    </location>
</feature>
<feature type="transmembrane region" description="Helical" evidence="1">
    <location>
        <begin position="57"/>
        <end position="74"/>
    </location>
</feature>
<feature type="transmembrane region" description="Helical" evidence="1">
    <location>
        <begin position="100"/>
        <end position="120"/>
    </location>
</feature>
<feature type="transmembrane region" description="Helical" evidence="1">
    <location>
        <begin position="126"/>
        <end position="146"/>
    </location>
</feature>
<feature type="transmembrane region" description="Helical" evidence="1">
    <location>
        <begin position="157"/>
        <end position="177"/>
    </location>
</feature>
<feature type="transmembrane region" description="Helical" evidence="1">
    <location>
        <begin position="189"/>
        <end position="209"/>
    </location>
</feature>
<feature type="transmembrane region" description="Helical" evidence="1">
    <location>
        <begin position="221"/>
        <end position="241"/>
    </location>
</feature>
<feature type="transmembrane region" description="Helical" evidence="1">
    <location>
        <begin position="283"/>
        <end position="303"/>
    </location>
</feature>
<feature type="transmembrane region" description="Helical" evidence="1">
    <location>
        <begin position="326"/>
        <end position="346"/>
    </location>
</feature>
<feature type="transmembrane region" description="Helical" evidence="1">
    <location>
        <begin position="353"/>
        <end position="373"/>
    </location>
</feature>
<feature type="transmembrane region" description="Helical" evidence="1">
    <location>
        <begin position="379"/>
        <end position="399"/>
    </location>
</feature>
<feature type="transmembrane region" description="Helical" evidence="1">
    <location>
        <begin position="416"/>
        <end position="436"/>
    </location>
</feature>
<feature type="transmembrane region" description="Helical" evidence="1">
    <location>
        <begin position="445"/>
        <end position="465"/>
    </location>
</feature>
<feature type="region of interest" description="Disordered" evidence="2">
    <location>
        <begin position="1"/>
        <end position="20"/>
    </location>
</feature>
<feature type="compositionally biased region" description="Low complexity" evidence="2">
    <location>
        <begin position="1"/>
        <end position="12"/>
    </location>
</feature>
<keyword id="KW-0256">Endoplasmic reticulum</keyword>
<keyword id="KW-0472">Membrane</keyword>
<keyword id="KW-1185">Reference proteome</keyword>
<keyword id="KW-0812">Transmembrane</keyword>
<keyword id="KW-1133">Transmembrane helix</keyword>
<keyword id="KW-0813">Transport</keyword>